<comment type="function">
    <text evidence="1">Catalyzes the reversible transfer of the terminal phosphate group between ATP and AMP. Plays an important role in cellular energy homeostasis and in adenine nucleotide metabolism.</text>
</comment>
<comment type="catalytic activity">
    <reaction evidence="1">
        <text>AMP + ATP = 2 ADP</text>
        <dbReference type="Rhea" id="RHEA:12973"/>
        <dbReference type="ChEBI" id="CHEBI:30616"/>
        <dbReference type="ChEBI" id="CHEBI:456215"/>
        <dbReference type="ChEBI" id="CHEBI:456216"/>
        <dbReference type="EC" id="2.7.4.3"/>
    </reaction>
</comment>
<comment type="pathway">
    <text evidence="1">Purine metabolism; AMP biosynthesis via salvage pathway; AMP from ADP: step 1/1.</text>
</comment>
<comment type="subunit">
    <text evidence="1">Monomer.</text>
</comment>
<comment type="subcellular location">
    <subcellularLocation>
        <location evidence="1">Cytoplasm</location>
    </subcellularLocation>
</comment>
<comment type="domain">
    <text evidence="1">Consists of three domains, a large central CORE domain and two small peripheral domains, NMPbind and LID, which undergo movements during catalysis. The LID domain closes over the site of phosphoryl transfer upon ATP binding. Assembling and dissambling the active center during each catalytic cycle provides an effective means to prevent ATP hydrolysis.</text>
</comment>
<comment type="similarity">
    <text evidence="1">Belongs to the adenylate kinase family.</text>
</comment>
<gene>
    <name evidence="1" type="primary">adk</name>
    <name type="ordered locus">SCH_0529</name>
</gene>
<protein>
    <recommendedName>
        <fullName evidence="1">Adenylate kinase</fullName>
        <shortName evidence="1">AK</shortName>
        <ecNumber evidence="1">2.7.4.3</ecNumber>
    </recommendedName>
    <alternativeName>
        <fullName evidence="1">ATP-AMP transphosphorylase</fullName>
    </alternativeName>
    <alternativeName>
        <fullName evidence="1">ATP:AMP phosphotransferase</fullName>
    </alternativeName>
    <alternativeName>
        <fullName evidence="1">Adenylate monophosphate kinase</fullName>
    </alternativeName>
</protein>
<proteinExistence type="inferred from homology"/>
<keyword id="KW-0067">ATP-binding</keyword>
<keyword id="KW-0963">Cytoplasm</keyword>
<keyword id="KW-0418">Kinase</keyword>
<keyword id="KW-0545">Nucleotide biosynthesis</keyword>
<keyword id="KW-0547">Nucleotide-binding</keyword>
<keyword id="KW-0808">Transferase</keyword>
<accession>Q57S76</accession>
<feature type="chain" id="PRO_1000058890" description="Adenylate kinase">
    <location>
        <begin position="1"/>
        <end position="214"/>
    </location>
</feature>
<feature type="region of interest" description="NMP" evidence="1">
    <location>
        <begin position="30"/>
        <end position="59"/>
    </location>
</feature>
<feature type="region of interest" description="LID">
    <location>
        <begin position="122"/>
        <end position="159"/>
    </location>
</feature>
<feature type="binding site" evidence="1">
    <location>
        <begin position="10"/>
        <end position="15"/>
    </location>
    <ligand>
        <name>ATP</name>
        <dbReference type="ChEBI" id="CHEBI:30616"/>
    </ligand>
</feature>
<feature type="binding site" evidence="1">
    <location>
        <position position="31"/>
    </location>
    <ligand>
        <name>AMP</name>
        <dbReference type="ChEBI" id="CHEBI:456215"/>
    </ligand>
</feature>
<feature type="binding site" evidence="1">
    <location>
        <position position="36"/>
    </location>
    <ligand>
        <name>AMP</name>
        <dbReference type="ChEBI" id="CHEBI:456215"/>
    </ligand>
</feature>
<feature type="binding site" evidence="1">
    <location>
        <begin position="57"/>
        <end position="59"/>
    </location>
    <ligand>
        <name>AMP</name>
        <dbReference type="ChEBI" id="CHEBI:456215"/>
    </ligand>
</feature>
<feature type="binding site" evidence="1">
    <location>
        <begin position="85"/>
        <end position="88"/>
    </location>
    <ligand>
        <name>AMP</name>
        <dbReference type="ChEBI" id="CHEBI:456215"/>
    </ligand>
</feature>
<feature type="binding site" evidence="1">
    <location>
        <position position="92"/>
    </location>
    <ligand>
        <name>AMP</name>
        <dbReference type="ChEBI" id="CHEBI:456215"/>
    </ligand>
</feature>
<feature type="binding site" evidence="1">
    <location>
        <position position="123"/>
    </location>
    <ligand>
        <name>ATP</name>
        <dbReference type="ChEBI" id="CHEBI:30616"/>
    </ligand>
</feature>
<feature type="binding site" evidence="1">
    <location>
        <begin position="132"/>
        <end position="133"/>
    </location>
    <ligand>
        <name>ATP</name>
        <dbReference type="ChEBI" id="CHEBI:30616"/>
    </ligand>
</feature>
<feature type="binding site" evidence="1">
    <location>
        <position position="156"/>
    </location>
    <ligand>
        <name>AMP</name>
        <dbReference type="ChEBI" id="CHEBI:456215"/>
    </ligand>
</feature>
<feature type="binding site" evidence="1">
    <location>
        <position position="167"/>
    </location>
    <ligand>
        <name>AMP</name>
        <dbReference type="ChEBI" id="CHEBI:456215"/>
    </ligand>
</feature>
<feature type="binding site" evidence="1">
    <location>
        <position position="200"/>
    </location>
    <ligand>
        <name>ATP</name>
        <dbReference type="ChEBI" id="CHEBI:30616"/>
    </ligand>
</feature>
<sequence>MRIILLGAPGAGKGTQAQFIMEKYGIPQISTGDMLRAAVKSGSELGKQAKDIMDAGKLVTDELVIALVKERIAQEDCRNGFLLDGFPRTIPQADAMKEAGIVVDYVLEFDVPDELIVDRIVGRRVHAASGRVYHVKFNPPKVEGKDDVTGEDLTTRKDDQEETVRKRLVEYHQMTAPLIGYYQKEAEAGNTKYAKVDGTQAVADVRAALEKILG</sequence>
<name>KAD_SALCH</name>
<reference key="1">
    <citation type="journal article" date="2005" name="Nucleic Acids Res.">
        <title>The genome sequence of Salmonella enterica serovar Choleraesuis, a highly invasive and resistant zoonotic pathogen.</title>
        <authorList>
            <person name="Chiu C.-H."/>
            <person name="Tang P."/>
            <person name="Chu C."/>
            <person name="Hu S."/>
            <person name="Bao Q."/>
            <person name="Yu J."/>
            <person name="Chou Y.-Y."/>
            <person name="Wang H.-S."/>
            <person name="Lee Y.-S."/>
        </authorList>
    </citation>
    <scope>NUCLEOTIDE SEQUENCE [LARGE SCALE GENOMIC DNA]</scope>
    <source>
        <strain>SC-B67</strain>
    </source>
</reference>
<evidence type="ECO:0000255" key="1">
    <source>
        <dbReference type="HAMAP-Rule" id="MF_00235"/>
    </source>
</evidence>
<organism>
    <name type="scientific">Salmonella choleraesuis (strain SC-B67)</name>
    <dbReference type="NCBI Taxonomy" id="321314"/>
    <lineage>
        <taxon>Bacteria</taxon>
        <taxon>Pseudomonadati</taxon>
        <taxon>Pseudomonadota</taxon>
        <taxon>Gammaproteobacteria</taxon>
        <taxon>Enterobacterales</taxon>
        <taxon>Enterobacteriaceae</taxon>
        <taxon>Salmonella</taxon>
    </lineage>
</organism>
<dbReference type="EC" id="2.7.4.3" evidence="1"/>
<dbReference type="EMBL" id="AE017220">
    <property type="protein sequence ID" value="AAX64435.1"/>
    <property type="molecule type" value="Genomic_DNA"/>
</dbReference>
<dbReference type="RefSeq" id="WP_001220237.1">
    <property type="nucleotide sequence ID" value="NC_006905.1"/>
</dbReference>
<dbReference type="SMR" id="Q57S76"/>
<dbReference type="KEGG" id="sec:SCH_0529"/>
<dbReference type="HOGENOM" id="CLU_032354_1_2_6"/>
<dbReference type="UniPathway" id="UPA00588">
    <property type="reaction ID" value="UER00649"/>
</dbReference>
<dbReference type="Proteomes" id="UP000000538">
    <property type="component" value="Chromosome"/>
</dbReference>
<dbReference type="GO" id="GO:0005737">
    <property type="term" value="C:cytoplasm"/>
    <property type="evidence" value="ECO:0007669"/>
    <property type="project" value="UniProtKB-SubCell"/>
</dbReference>
<dbReference type="GO" id="GO:0004017">
    <property type="term" value="F:adenylate kinase activity"/>
    <property type="evidence" value="ECO:0007669"/>
    <property type="project" value="UniProtKB-UniRule"/>
</dbReference>
<dbReference type="GO" id="GO:0005524">
    <property type="term" value="F:ATP binding"/>
    <property type="evidence" value="ECO:0007669"/>
    <property type="project" value="UniProtKB-UniRule"/>
</dbReference>
<dbReference type="GO" id="GO:0044209">
    <property type="term" value="P:AMP salvage"/>
    <property type="evidence" value="ECO:0007669"/>
    <property type="project" value="UniProtKB-UniRule"/>
</dbReference>
<dbReference type="CDD" id="cd01428">
    <property type="entry name" value="ADK"/>
    <property type="match status" value="1"/>
</dbReference>
<dbReference type="FunFam" id="3.40.50.300:FF:000106">
    <property type="entry name" value="Adenylate kinase mitochondrial"/>
    <property type="match status" value="1"/>
</dbReference>
<dbReference type="Gene3D" id="3.40.50.300">
    <property type="entry name" value="P-loop containing nucleotide triphosphate hydrolases"/>
    <property type="match status" value="1"/>
</dbReference>
<dbReference type="HAMAP" id="MF_00235">
    <property type="entry name" value="Adenylate_kinase_Adk"/>
    <property type="match status" value="1"/>
</dbReference>
<dbReference type="InterPro" id="IPR006259">
    <property type="entry name" value="Adenyl_kin_sub"/>
</dbReference>
<dbReference type="InterPro" id="IPR000850">
    <property type="entry name" value="Adenylat/UMP-CMP_kin"/>
</dbReference>
<dbReference type="InterPro" id="IPR033690">
    <property type="entry name" value="Adenylat_kinase_CS"/>
</dbReference>
<dbReference type="InterPro" id="IPR007862">
    <property type="entry name" value="Adenylate_kinase_lid-dom"/>
</dbReference>
<dbReference type="InterPro" id="IPR027417">
    <property type="entry name" value="P-loop_NTPase"/>
</dbReference>
<dbReference type="NCBIfam" id="TIGR01351">
    <property type="entry name" value="adk"/>
    <property type="match status" value="1"/>
</dbReference>
<dbReference type="NCBIfam" id="NF001379">
    <property type="entry name" value="PRK00279.1-1"/>
    <property type="match status" value="1"/>
</dbReference>
<dbReference type="NCBIfam" id="NF001380">
    <property type="entry name" value="PRK00279.1-2"/>
    <property type="match status" value="1"/>
</dbReference>
<dbReference type="NCBIfam" id="NF001381">
    <property type="entry name" value="PRK00279.1-3"/>
    <property type="match status" value="1"/>
</dbReference>
<dbReference type="NCBIfam" id="NF011100">
    <property type="entry name" value="PRK14527.1"/>
    <property type="match status" value="1"/>
</dbReference>
<dbReference type="PANTHER" id="PTHR23359">
    <property type="entry name" value="NUCLEOTIDE KINASE"/>
    <property type="match status" value="1"/>
</dbReference>
<dbReference type="Pfam" id="PF00406">
    <property type="entry name" value="ADK"/>
    <property type="match status" value="1"/>
</dbReference>
<dbReference type="Pfam" id="PF05191">
    <property type="entry name" value="ADK_lid"/>
    <property type="match status" value="1"/>
</dbReference>
<dbReference type="PRINTS" id="PR00094">
    <property type="entry name" value="ADENYLTKNASE"/>
</dbReference>
<dbReference type="SUPFAM" id="SSF52540">
    <property type="entry name" value="P-loop containing nucleoside triphosphate hydrolases"/>
    <property type="match status" value="1"/>
</dbReference>
<dbReference type="PROSITE" id="PS00113">
    <property type="entry name" value="ADENYLATE_KINASE"/>
    <property type="match status" value="1"/>
</dbReference>